<feature type="chain" id="PRO_0000462220" description="Centrosome-associated protein CEP530">
    <location>
        <begin position="1"/>
        <end position="4885"/>
    </location>
</feature>
<feature type="coiled-coil region" evidence="1">
    <location>
        <begin position="1437"/>
        <end position="1528"/>
    </location>
</feature>
<keyword id="KW-0131">Cell cycle</keyword>
<keyword id="KW-0132">Cell division</keyword>
<keyword id="KW-0175">Coiled coil</keyword>
<keyword id="KW-0963">Cytoplasm</keyword>
<keyword id="KW-0206">Cytoskeleton</keyword>
<keyword id="KW-1185">Reference proteome</keyword>
<accession>S8G033</accession>
<name>CP530_TOXGM</name>
<gene>
    <name evidence="4" type="primary">CEP530</name>
    <name evidence="5" type="ORF">TGME49_246190</name>
</gene>
<sequence>MSSSASSRSVESSPARSSAASSSSSSEQHVAGGRLSSSQVNSTSVSSQSSSSRRARDDWCQSSHSSSSGSASSDSSSFCRGSRDSSSASVSRGTWRVDRDSFSVSGTSRSRLLSFPGSSHQPNRTENASHPDDLSSFRDSCVRRDTDTAERVATVRVNFPSRQNNDSSSGTCTSPISSSCDYSATESHSSASPSLRPSSGVVSSSRSSSRPGAALPLSVSSSSLLSQKKGRRKEAESLVDSSSTHSKQRDSAACRLLRVSPSASETTSVCRMSSGSGTARVARLEHQVEASFNPEEYPECFVCHPSLVAPSRLRETGKAQRDQRGLYTRFGRLHLSPQRLSVEATCVYGHCSSPPLSHLGAGAENSEGTNDLALSNEDKKGETQNARKRSASAFSESVSFREDTRRGSLLSVSLPAASSVLGSDLLSPSLREVYRHRGDSYLSRFKGGSSLLPAPRRSSCCVSSVPPFPESEKRNAGSDRRPTRSASLSSLLPNQPPASSSRRPSCSFSLLPAPLFSFGRRDPGGFDTDDACLRHDKESGVCTPAGTDLFVDVSREIRIIDALSEIQKESLIAAHCLDHSAALSEASAPLDASPSSSTVPHVSPSSVSSSLGRLHSSEKQTDCLRLRGSRGLQRRQRHTCSVAPSSADPLAPSFLQPHPSSKQLNQLLDHWRSGRVSVPRGSRVETRGEASCHAFDASPSCPPCSSQSLGSAAPNNACSRAAYGARLEAQANVLSNLDSRQGGRKEEEAADGGEDGEEGSRRLSQQTRPEGVEDRRGWTAIEEFNDCDGNVPRRSQLADFLRTCHVSRSQVGSVLGTHAKESSQDGEGEDQTGEDKGDAGDRCVTHEDDGGILCRSLESRKSEAKGYAMRKGSQKERVEKERMEGSPAKRRGPFPGGGETWTLPAYEADGLSSPRGREVVASCSSAGRLETSSKDASLSCSAFAGSENERLRAWALQAPSAEAFDRVDLVVRRLGLPQKTLQEKQTRPGDPGRSLLDEKPTVSEEKTKDRGGVAVPALASAAVKPFGNNEGGDGSAWSRLTNDLEAFRWKQMMQPSSTFLSAPVAKRGRALSPQGGADSEGRGESEEGRRGGCAAARRRAGAEEETRELLEAYEAARVKILAKSDEEAMQAAVSNSLHQSERVLGKLENVTRRLLEATCQSPKTKPISCSSSSAPSSSSSSSFSSSSSSSDCFSGDGASEATTVAPNGSAALSPPDGEKQRPSVGQRDALQAKLWESERELNSKDAEIGRTLQAVADSQAELARCRQELQESRSKALEAAKKAAVAQRMVRLLHQRRQEDRERWRQAVEECYRSRRSDQEADEDKQETDSASKKTDGNRNTESSLSRTSSCSSCSSSCSSFSSGSSSCSSSCSSCSSSCSSSCSSCSSSCSSSCSSSSSCSASCCGSTLLASASRPSSLSSAWFPAEDELPEVEELVAEYEAETRGYESRIAELQTLLEARNSAVEQLEVKGEALRNEVAFLQSMTEELRRARDAEEDCVLGALRQQVEEAEQSTLRLGREKDQLRSELDRVRASFTKQLAALETLNCRLRKEKEIFAEREKSQRRLHQEEHERMTRELHALRSEKEAGEAELLVLATAKAAAEMKCQQLEQQQETLKIHQERLCGNLLHLKNKAHGLSLSRRNHVSRQDSTNQAPSAECVDASSRRRVTSSVSEDDPSSALWSSSAERTDTSGNLFSSLSGPRSRSSGSPGESFERSHSSSCLASSPSCPSAASGSKEETSGSLQRMRSSASGSSKSVSVSSVNVLTYSEGPPLQSRSEFASSRPSFPSPSSASLSSESHRACGAPQAKEAANFFERLSSRLQSMREESERRQHALPGLPPHARSLEATQRQGRDSELGSFGEGPQGRAHSRQSGGDSAPSSFPAVPSQSGSSSASRGTEAFLGLAGDLERKDENASRFLSDSLGAQGQAQTDRGPMGFTARDEAGHLQGLPSGENDESITSSAFFARARQMKNSGKAVHSPDPRKDSGSESSDSQDPSAEEEEGDERAEEEEGDERAEDEEEDEREEEEEEEDEREEEEEEEDEREEEEEEGDERAEDEEEDEREEEEEEDERVEEEEEEDEREEEESVRGEGESGSGSISSSRRSRRSTPERGTRISSFSPRNGAGRKTSRSSFSGESRTSSEGSRRSGTSRSRDYASSPTSSRRDGETSPPGKSGHRRKRSNSASSEDSSRSAPQSDVSVNQVYAHPAALGSKTSGVRTPQASASRGAPASTAGATGGRPVSGSHPSRATERRDDGRQAKSVKKKEPQTRVRSRPRPESQESKTPESADSGATLDRGARHRETPRRNSESEEARPGEGERTCVSPASGGEKRRNFVSRDETSMGASRADHQETMKNAKLSTISRKRTPSPVAIYRVSPSSSSNASASQRESRAAKSSNTGMSSSSSFSLYRPHDFSREGSQGGPPPDFKFSEASSSSSSSISSSHSSSVPFPFSALASGSSSSAPAKTEKKVECEGAASSLSSLGASSSCHERVDPELRQQRGNTAEAQQKSDPSTVSPRKHSDEQRTEREGKTRRPEDSGCATQHRNPETRGRPPQPSLVAIQEGHPTSPFSVLPQHPPAARQLQPLSPSLRLSPSSVRCKQCAGVSSRFPHAHDLRVEPCCHRRCEGRNCSSGEESGEREQAVRCRHNPIPGRGPPVTENTVCHAPSDQGRTLAGGPRLAGSRHKEPENLSSASSCPSSSCPRAARQREGEGEKRHRETPSVKREENRKSSRTGEASSSVSIPNERSSDDVSPSGLERLSFGCTYTRYGREGREEKSPLLAPGHAANQRLTDGRSLHSFPDERKPSDMERRVASHMLPEKRTEEASPAAASGPGQRRLCGEACRPETGDKCGERQPVSSFSREKGTSSVQARRDESDEPRFVEKLRIGEQNPSLVLREMEDLRVTSRTAAEIDACMRHARLACRRAEPVSACPPSPFSFRGSVGDQLSPCESPHGPSHGASVSCVSAPTAIPPACCWLPEETAARGHRGNCVHANWQALADEELLEEEDGDTRRGEGEEREAREFGDRGERDDGHRAARGEVGCGVLGGRRERREETGRRRDTTRIPESCGGGEESFSPSSPYIQEERRQREAAQAVEAVARDADRNAYSHEHVQSLKEKLLRTIQTNEILRKRSRELSKKNRELRQHLLGDPAALPLPSFPSSSLLSSLSLAHSDRCRDMPQRLPSPPREDLKSSDSGVSSGALAGESDRRYSCPRETSSPSCGGRGGRRHPVFCRELSRNGNSRLDAQSGPQCRDFSPQLWRGERGNAGEMRPRESRESFGSCREVDDDSPQRWTRDGDREERRRARLPPSSSSPRHAGQAVDQRRLNYPQSFGASELRLCSSTPSFDEGGFPCSSTPSFDDEAILPCGREELQDSVGDNRGHLWGKRGRGREDPSWEATARTSGASPAYEEGWFRQEAFEEREEERRRQQFSPGCSPRSPTFLPCGGGTLRDAVEAPQPSKAACDGGYAGTVWSLPCVPDKAEVDNERREWKQATCEREPAEGDKTKCDKDAEGSERNCEGEREEKRRVKGLSEEVASVEGDFWAPASIIPSPLPSPAFAATGEKRLGDTVAPGVSSQAAFSLSCLSSARCASNPLPLTLDEAAGKVAAVESRSPPSVSPPPSTVSLLSSPEKARQGSDEGEETREAEQKREPREAIFPSPSLFSPAASFSSDASSSPCLAALRAVSPPGSRAKRLGEGAPEQVFLKEGETVNAGRHVLPQSLDAETGGFSNSAPVRERPRSLDLGKRNLHLAHEEDALAIHDQTSRTGSENEDSRDAAEDEAGVYAMPKAFEACGRAADGNGSSQTSCASLPKARDGESQEARPSLIVSTCEESPFCLCRKPPASLFEDPGSQKEAEKPLGKGEDGGVERGGEADRGAELELEEESSRVRQEAGEKANRDCNAKLRREQRGEGEIREETHEEKRTKAEAAEEETGGERREEETLKGDQEFRCERRDQSTGEQAAEERKTTGTKARCLADVLSRNINPLFPAEAVPGEEEDQDAGIFAEETNAAGCAKSERNEVDDAQFGSPRETGDSQTVCFSPHSALRCLSIKRLSLPLPSRSCKTFAEKLLSPSHVRSSLSSALAGSDSSSPGALGVSENVNAESRSPSYASTCWSSFLEDGERTEEARGCSRPSQPGVCTPSFQPSSLPPSFFTELPTTHMIQTARTNFPSTPLSFRSSSSSSPILGDLSRKSSSSRCSCGSSSPSPARGTAPRRPPVSSLRLSLPRAVASAQPSFCCNSSRSSSSLSSFSLSSSRPFLSARPPWGSTLGLKSKTRVGRQPRGYPAYLFHLHEAGKTICRRCDACPFRLLQREQEELRRLQALLLARKNRERSETREDVKPVQRESPSFLLKHSEERKDVLPGRTENDGQGPSLTSTRLRLGLLCQPMATALRQNEFRRENMDLCPRSPSPRGASSSVSPASSASPASSASPASSASRTSRTSRASRTSSPRSSVSHVSSARQGEAVRDVTESSDLRRLRPFESLRTLEKLRPLETRSVSSRALPLTPRVQTKSLTSRSASMAPVSSRAVSTSRGPRASLNSLSSMWTSQLVSAHHMKSRRLPDVDSCLARFPWFSAEDARLLACLLQQRRRELWEEIFNYERDLALAAAAPSQKRAAAPEDRREDGDTHRPGSLTETTEREGKEQERKAETDREEQERKTETDREEQERKTETDREEQKRKTETDREEHERKTETDREEQGRKAETDREEQERKTETDREEQERKAETERLQDWRETRKSEKTAKGSEQKSSRQRKLKTDAKDPRAGREEDTEKGKEGRKENARCRLVMRESGNLYGGSSCADLLLSPPGEDGGSSGCDRNGGESHESREEKKSRPPWRRPPSLVPRLCKGAWCGASKAAAALRHAEMNTR</sequence>
<protein>
    <recommendedName>
        <fullName evidence="4">Centrosome-associated protein CEP530</fullName>
        <shortName evidence="3">TgCep530</shortName>
    </recommendedName>
    <alternativeName>
        <fullName evidence="3">Centrosome protein 530</fullName>
    </alternativeName>
</protein>
<evidence type="ECO:0000255" key="1"/>
<evidence type="ECO:0000269" key="2">
    <source>
    </source>
</evidence>
<evidence type="ECO:0000303" key="3">
    <source>
    </source>
</evidence>
<evidence type="ECO:0000305" key="4"/>
<evidence type="ECO:0000312" key="5">
    <source>
        <dbReference type="EMBL" id="EPT24845.1"/>
    </source>
</evidence>
<evidence type="ECO:0000312" key="6">
    <source>
        <dbReference type="Proteomes" id="UP000001529"/>
    </source>
</evidence>
<dbReference type="EMBL" id="KE138840">
    <property type="protein sequence ID" value="EPT24845.1"/>
    <property type="molecule type" value="Genomic_DNA"/>
</dbReference>
<dbReference type="RefSeq" id="XP_018634913.1">
    <property type="nucleotide sequence ID" value="XM_018780775.1"/>
</dbReference>
<dbReference type="EnsemblProtists" id="TGME49_246190-t26_1">
    <property type="protein sequence ID" value="TGME49_246190-t26_1"/>
    <property type="gene ID" value="TGME49_246190"/>
</dbReference>
<dbReference type="GeneID" id="7899502"/>
<dbReference type="KEGG" id="tgo:TGME49_246190"/>
<dbReference type="VEuPathDB" id="ToxoDB:TGME49_246190"/>
<dbReference type="OrthoDB" id="210506at2759"/>
<dbReference type="Proteomes" id="UP000001529">
    <property type="component" value="Chromosome XII"/>
</dbReference>
<dbReference type="GO" id="GO:0005634">
    <property type="term" value="C:nucleus"/>
    <property type="evidence" value="ECO:0007669"/>
    <property type="project" value="UniProtKB-SubCell"/>
</dbReference>
<dbReference type="GO" id="GO:0051213">
    <property type="term" value="F:dioxygenase activity"/>
    <property type="evidence" value="ECO:0007669"/>
    <property type="project" value="UniProtKB-KW"/>
</dbReference>
<dbReference type="GO" id="GO:0046872">
    <property type="term" value="F:metal ion binding"/>
    <property type="evidence" value="ECO:0007669"/>
    <property type="project" value="UniProtKB-KW"/>
</dbReference>
<dbReference type="InterPro" id="IPR026306">
    <property type="entry name" value="RSBN1/Dpy-21"/>
</dbReference>
<dbReference type="InterPro" id="IPR001368">
    <property type="entry name" value="TNFR/NGFR_Cys_rich_reg"/>
</dbReference>
<dbReference type="PANTHER" id="PTHR13354:SF11">
    <property type="entry name" value="LYSINE-SPECIFIC DEMETHYLASE 9"/>
    <property type="match status" value="1"/>
</dbReference>
<dbReference type="PANTHER" id="PTHR13354">
    <property type="entry name" value="ROUND SPERMATID BASIC PROTEIN 1"/>
    <property type="match status" value="1"/>
</dbReference>
<dbReference type="PROSITE" id="PS00652">
    <property type="entry name" value="TNFR_NGFR_1"/>
    <property type="match status" value="1"/>
</dbReference>
<organism evidence="6">
    <name type="scientific">Toxoplasma gondii (strain ATCC 50611 / Me49)</name>
    <dbReference type="NCBI Taxonomy" id="508771"/>
    <lineage>
        <taxon>Eukaryota</taxon>
        <taxon>Sar</taxon>
        <taxon>Alveolata</taxon>
        <taxon>Apicomplexa</taxon>
        <taxon>Conoidasida</taxon>
        <taxon>Coccidia</taxon>
        <taxon>Eucoccidiorida</taxon>
        <taxon>Eimeriorina</taxon>
        <taxon>Sarcocystidae</taxon>
        <taxon>Toxoplasma</taxon>
    </lineage>
</organism>
<comment type="function">
    <text evidence="2">Required for proper nuclei segregation during the cell division (PubMed:29447426). Plays a role in coordination of karyokinesis and cytokinesis during the tachyzoite cell cycle (PubMed:29447426).</text>
</comment>
<comment type="subcellular location">
    <subcellularLocation>
        <location evidence="2">Cytoplasm</location>
        <location evidence="2">Cytoskeleton</location>
        <location evidence="2">Microtubule organizing center</location>
        <location evidence="2">Centrosome</location>
    </subcellularLocation>
    <text evidence="2">Localizes at the interface of the inner and outer centrosomes.</text>
</comment>
<comment type="disruption phenotype">
    <text evidence="2">Conditional knockdown results in parasite inability to form plaques, indicating an essential role for parasite survival (PubMed:29447426). Reduced number of parasites per vacuole (PubMed:29447426). Formation of nucleus-deficient parasites due to nuclei segregation defects (PubMed:29447426). Abnormal number of CEN1 foci per parasite nucleus, indicating uncontrolled duplication and/or fragmentation of the outer core centrosome (PubMed:29447426). No significant effects on apicoplast segregation (PubMed:29447426). No significant effects on kinetochore (PubMed:29447426). No significant effects on spindle microtubules (PubMed:29447426).</text>
</comment>
<proteinExistence type="predicted"/>
<reference evidence="6" key="1">
    <citation type="submission" date="2013-04" db="EMBL/GenBank/DDBJ databases">
        <authorList>
            <person name="Sibley D."/>
            <person name="Venepally P."/>
            <person name="Karamycheva S."/>
            <person name="Hadjithomas M."/>
            <person name="Khan A."/>
            <person name="Brunk B."/>
            <person name="Roos D."/>
            <person name="Caler E."/>
            <person name="Lorenzi H."/>
        </authorList>
    </citation>
    <scope>NUCLEOTIDE SEQUENCE [LARGE SCALE GENOMIC DNA]</scope>
    <source>
        <strain evidence="6">ATCC 50611 / Me49</strain>
    </source>
</reference>
<reference evidence="4" key="2">
    <citation type="journal article" date="2018" name="Cell. Microbiol.">
        <title>A coiled-coil protein is required for coordination of karyokinesis and cytokinesis in Toxoplasma gondii.</title>
        <authorList>
            <person name="Courjol F."/>
            <person name="Gissot M."/>
        </authorList>
    </citation>
    <scope>FUNCTION</scope>
    <scope>SUBCELLULAR LOCATION</scope>
    <scope>DISRUPTION PHENOTYPE</scope>
</reference>